<sequence>MWIGVVSLFPDMFRAISDNGVTGRAVKNKLLSIQCWNPRDFTLDKHRTVDDRPYGGGPGMLMMVKPLRDAILAAKKAAREAGHEAKVIYLSPQGKRLDHCGAQLLSGSDALILVAGRYEGVDERLIESLVDEEWSVGDYVLSGGELPAMILIDAVVRFVPGVLGHVLSAEQDSFADGLLDCPHYTRPEVLDGKQVPSVLLSGDHEKIRLWRSKQALQRTKQRRPDLLNNLALTDEQAKLLAALESDSD</sequence>
<dbReference type="EC" id="2.1.1.228" evidence="1"/>
<dbReference type="EMBL" id="CP000510">
    <property type="protein sequence ID" value="ABM05051.1"/>
    <property type="molecule type" value="Genomic_DNA"/>
</dbReference>
<dbReference type="RefSeq" id="WP_011771603.1">
    <property type="nucleotide sequence ID" value="NC_008709.1"/>
</dbReference>
<dbReference type="SMR" id="A1SZY6"/>
<dbReference type="STRING" id="357804.Ping_3365"/>
<dbReference type="KEGG" id="pin:Ping_3365"/>
<dbReference type="eggNOG" id="COG0336">
    <property type="taxonomic scope" value="Bacteria"/>
</dbReference>
<dbReference type="HOGENOM" id="CLU_047363_0_1_6"/>
<dbReference type="OrthoDB" id="9807416at2"/>
<dbReference type="Proteomes" id="UP000000639">
    <property type="component" value="Chromosome"/>
</dbReference>
<dbReference type="GO" id="GO:0005829">
    <property type="term" value="C:cytosol"/>
    <property type="evidence" value="ECO:0007669"/>
    <property type="project" value="TreeGrafter"/>
</dbReference>
<dbReference type="GO" id="GO:0052906">
    <property type="term" value="F:tRNA (guanine(37)-N1)-methyltransferase activity"/>
    <property type="evidence" value="ECO:0007669"/>
    <property type="project" value="UniProtKB-UniRule"/>
</dbReference>
<dbReference type="GO" id="GO:0002939">
    <property type="term" value="P:tRNA N1-guanine methylation"/>
    <property type="evidence" value="ECO:0007669"/>
    <property type="project" value="TreeGrafter"/>
</dbReference>
<dbReference type="CDD" id="cd18080">
    <property type="entry name" value="TrmD-like"/>
    <property type="match status" value="1"/>
</dbReference>
<dbReference type="FunFam" id="1.10.1270.20:FF:000001">
    <property type="entry name" value="tRNA (guanine-N(1)-)-methyltransferase"/>
    <property type="match status" value="1"/>
</dbReference>
<dbReference type="FunFam" id="3.40.1280.10:FF:000001">
    <property type="entry name" value="tRNA (guanine-N(1)-)-methyltransferase"/>
    <property type="match status" value="1"/>
</dbReference>
<dbReference type="Gene3D" id="3.40.1280.10">
    <property type="match status" value="1"/>
</dbReference>
<dbReference type="Gene3D" id="1.10.1270.20">
    <property type="entry name" value="tRNA(m1g37)methyltransferase, domain 2"/>
    <property type="match status" value="1"/>
</dbReference>
<dbReference type="HAMAP" id="MF_00605">
    <property type="entry name" value="TrmD"/>
    <property type="match status" value="1"/>
</dbReference>
<dbReference type="InterPro" id="IPR029028">
    <property type="entry name" value="Alpha/beta_knot_MTases"/>
</dbReference>
<dbReference type="InterPro" id="IPR023148">
    <property type="entry name" value="tRNA_m1G_MeTrfase_C_sf"/>
</dbReference>
<dbReference type="InterPro" id="IPR002649">
    <property type="entry name" value="tRNA_m1G_MeTrfase_TrmD"/>
</dbReference>
<dbReference type="InterPro" id="IPR029026">
    <property type="entry name" value="tRNA_m1G_MTases_N"/>
</dbReference>
<dbReference type="InterPro" id="IPR016009">
    <property type="entry name" value="tRNA_MeTrfase_TRMD/TRM10"/>
</dbReference>
<dbReference type="NCBIfam" id="NF000648">
    <property type="entry name" value="PRK00026.1"/>
    <property type="match status" value="1"/>
</dbReference>
<dbReference type="NCBIfam" id="TIGR00088">
    <property type="entry name" value="trmD"/>
    <property type="match status" value="1"/>
</dbReference>
<dbReference type="PANTHER" id="PTHR46417">
    <property type="entry name" value="TRNA (GUANINE-N(1)-)-METHYLTRANSFERASE"/>
    <property type="match status" value="1"/>
</dbReference>
<dbReference type="PANTHER" id="PTHR46417:SF1">
    <property type="entry name" value="TRNA (GUANINE-N(1)-)-METHYLTRANSFERASE"/>
    <property type="match status" value="1"/>
</dbReference>
<dbReference type="Pfam" id="PF01746">
    <property type="entry name" value="tRNA_m1G_MT"/>
    <property type="match status" value="1"/>
</dbReference>
<dbReference type="PIRSF" id="PIRSF000386">
    <property type="entry name" value="tRNA_mtase"/>
    <property type="match status" value="1"/>
</dbReference>
<dbReference type="SUPFAM" id="SSF75217">
    <property type="entry name" value="alpha/beta knot"/>
    <property type="match status" value="1"/>
</dbReference>
<name>TRMD_PSYIN</name>
<keyword id="KW-0963">Cytoplasm</keyword>
<keyword id="KW-0489">Methyltransferase</keyword>
<keyword id="KW-1185">Reference proteome</keyword>
<keyword id="KW-0949">S-adenosyl-L-methionine</keyword>
<keyword id="KW-0808">Transferase</keyword>
<keyword id="KW-0819">tRNA processing</keyword>
<organism>
    <name type="scientific">Psychromonas ingrahamii (strain DSM 17664 / CCUG 51855 / 37)</name>
    <dbReference type="NCBI Taxonomy" id="357804"/>
    <lineage>
        <taxon>Bacteria</taxon>
        <taxon>Pseudomonadati</taxon>
        <taxon>Pseudomonadota</taxon>
        <taxon>Gammaproteobacteria</taxon>
        <taxon>Alteromonadales</taxon>
        <taxon>Psychromonadaceae</taxon>
        <taxon>Psychromonas</taxon>
    </lineage>
</organism>
<comment type="function">
    <text evidence="1">Specifically methylates guanosine-37 in various tRNAs.</text>
</comment>
<comment type="catalytic activity">
    <reaction evidence="1">
        <text>guanosine(37) in tRNA + S-adenosyl-L-methionine = N(1)-methylguanosine(37) in tRNA + S-adenosyl-L-homocysteine + H(+)</text>
        <dbReference type="Rhea" id="RHEA:36899"/>
        <dbReference type="Rhea" id="RHEA-COMP:10145"/>
        <dbReference type="Rhea" id="RHEA-COMP:10147"/>
        <dbReference type="ChEBI" id="CHEBI:15378"/>
        <dbReference type="ChEBI" id="CHEBI:57856"/>
        <dbReference type="ChEBI" id="CHEBI:59789"/>
        <dbReference type="ChEBI" id="CHEBI:73542"/>
        <dbReference type="ChEBI" id="CHEBI:74269"/>
        <dbReference type="EC" id="2.1.1.228"/>
    </reaction>
</comment>
<comment type="subunit">
    <text evidence="1">Homodimer.</text>
</comment>
<comment type="subcellular location">
    <subcellularLocation>
        <location evidence="1">Cytoplasm</location>
    </subcellularLocation>
</comment>
<comment type="similarity">
    <text evidence="1">Belongs to the RNA methyltransferase TrmD family.</text>
</comment>
<proteinExistence type="inferred from homology"/>
<reference key="1">
    <citation type="journal article" date="2008" name="BMC Genomics">
        <title>Genomics of an extreme psychrophile, Psychromonas ingrahamii.</title>
        <authorList>
            <person name="Riley M."/>
            <person name="Staley J.T."/>
            <person name="Danchin A."/>
            <person name="Wang T.Z."/>
            <person name="Brettin T.S."/>
            <person name="Hauser L.J."/>
            <person name="Land M.L."/>
            <person name="Thompson L.S."/>
        </authorList>
    </citation>
    <scope>NUCLEOTIDE SEQUENCE [LARGE SCALE GENOMIC DNA]</scope>
    <source>
        <strain>DSM 17664 / CCUG 51855 / 37</strain>
    </source>
</reference>
<evidence type="ECO:0000255" key="1">
    <source>
        <dbReference type="HAMAP-Rule" id="MF_00605"/>
    </source>
</evidence>
<accession>A1SZY6</accession>
<gene>
    <name evidence="1" type="primary">trmD</name>
    <name type="ordered locus">Ping_3365</name>
</gene>
<protein>
    <recommendedName>
        <fullName evidence="1">tRNA (guanine-N(1)-)-methyltransferase</fullName>
        <ecNumber evidence="1">2.1.1.228</ecNumber>
    </recommendedName>
    <alternativeName>
        <fullName evidence="1">M1G-methyltransferase</fullName>
    </alternativeName>
    <alternativeName>
        <fullName evidence="1">tRNA [GM37] methyltransferase</fullName>
    </alternativeName>
</protein>
<feature type="chain" id="PRO_1000006507" description="tRNA (guanine-N(1)-)-methyltransferase">
    <location>
        <begin position="1"/>
        <end position="248"/>
    </location>
</feature>
<feature type="binding site" evidence="1">
    <location>
        <position position="116"/>
    </location>
    <ligand>
        <name>S-adenosyl-L-methionine</name>
        <dbReference type="ChEBI" id="CHEBI:59789"/>
    </ligand>
</feature>
<feature type="binding site" evidence="1">
    <location>
        <begin position="136"/>
        <end position="141"/>
    </location>
    <ligand>
        <name>S-adenosyl-L-methionine</name>
        <dbReference type="ChEBI" id="CHEBI:59789"/>
    </ligand>
</feature>